<accession>Q2G0R9</accession>
<keyword id="KW-0002">3D-structure</keyword>
<keyword id="KW-0963">Cytoplasm</keyword>
<keyword id="KW-0378">Hydrolase</keyword>
<keyword id="KW-1185">Reference proteome</keyword>
<keyword id="KW-0694">RNA-binding</keyword>
<keyword id="KW-0820">tRNA-binding</keyword>
<comment type="function">
    <text evidence="1">Hydrolyzes ribosome-free peptidyl-tRNAs (with 1 or more amino acids incorporated), which drop off the ribosome during protein synthesis, or as a result of ribosome stalling.</text>
</comment>
<comment type="function">
    <text evidence="1">Catalyzes the release of premature peptidyl moieties from peptidyl-tRNA molecules trapped in stalled 50S ribosomal subunits, and thus maintains levels of free tRNAs and 50S ribosomes.</text>
</comment>
<comment type="catalytic activity">
    <reaction evidence="1">
        <text>an N-acyl-L-alpha-aminoacyl-tRNA + H2O = an N-acyl-L-amino acid + a tRNA + H(+)</text>
        <dbReference type="Rhea" id="RHEA:54448"/>
        <dbReference type="Rhea" id="RHEA-COMP:10123"/>
        <dbReference type="Rhea" id="RHEA-COMP:13883"/>
        <dbReference type="ChEBI" id="CHEBI:15377"/>
        <dbReference type="ChEBI" id="CHEBI:15378"/>
        <dbReference type="ChEBI" id="CHEBI:59874"/>
        <dbReference type="ChEBI" id="CHEBI:78442"/>
        <dbReference type="ChEBI" id="CHEBI:138191"/>
        <dbReference type="EC" id="3.1.1.29"/>
    </reaction>
</comment>
<comment type="subunit">
    <text evidence="1 2">Monomer.</text>
</comment>
<comment type="subcellular location">
    <subcellularLocation>
        <location evidence="1">Cytoplasm</location>
    </subcellularLocation>
</comment>
<comment type="similarity">
    <text evidence="1">Belongs to the PTH family.</text>
</comment>
<reference key="1">
    <citation type="book" date="2006" name="Gram positive pathogens, 2nd edition">
        <title>The Staphylococcus aureus NCTC 8325 genome.</title>
        <editorList>
            <person name="Fischetti V."/>
            <person name="Novick R."/>
            <person name="Ferretti J."/>
            <person name="Portnoy D."/>
            <person name="Rood J."/>
        </editorList>
        <authorList>
            <person name="Gillaspy A.F."/>
            <person name="Worrell V."/>
            <person name="Orvis J."/>
            <person name="Roe B.A."/>
            <person name="Dyer D.W."/>
            <person name="Iandolo J.J."/>
        </authorList>
    </citation>
    <scope>NUCLEOTIDE SEQUENCE [LARGE SCALE GENOMIC DNA]</scope>
    <source>
        <strain>NCTC 8325 / PS 47</strain>
    </source>
</reference>
<reference evidence="4" key="2">
    <citation type="journal article" date="2015" name="Acta Biochim. Biophys. Sin.">
        <title>Crystal structure of Staphylococcus aureus peptidyl-tRNA hydrolase at a 2.25 A resolution.</title>
        <authorList>
            <person name="Zhang F."/>
            <person name="Song Y."/>
            <person name="Niu L."/>
            <person name="Teng M."/>
            <person name="Li X."/>
        </authorList>
    </citation>
    <scope>X-RAY CRYSTALLOGRAPHY (2.25 ANGSTROMS)</scope>
    <scope>SUBUNIT</scope>
    <source>
        <strain evidence="3">NCTC 8325 / PS 47</strain>
    </source>
</reference>
<sequence length="190" mass="21703">MKCIVGLGNIGKRFELTRHNIGFEVVDYILEKNNFSLDKQKFKGAYTIERMNGDKVLFIEPMTMMNLSGEAVAPIMDYYNVNPEDLIVLYDDLDLEQGQVRLRQKGSAGGHNGMKSIIKMLGTDQFKRIRIGVGRPTNGMTVPDYVLQRFSNDEMVTMEKVIEHAARAIEKFVETSRFDHVMNEFNGEVK</sequence>
<protein>
    <recommendedName>
        <fullName evidence="1">Peptidyl-tRNA hydrolase</fullName>
        <shortName evidence="1">Pth</shortName>
        <ecNumber evidence="1">3.1.1.29</ecNumber>
    </recommendedName>
    <alternativeName>
        <fullName evidence="3">SaPth</fullName>
    </alternativeName>
</protein>
<gene>
    <name evidence="1" type="primary">pth</name>
    <name type="ordered locus">SAOUHSC_00475</name>
</gene>
<dbReference type="EC" id="3.1.1.29" evidence="1"/>
<dbReference type="EMBL" id="CP000253">
    <property type="protein sequence ID" value="ABD29630.1"/>
    <property type="molecule type" value="Genomic_DNA"/>
</dbReference>
<dbReference type="RefSeq" id="WP_000649791.1">
    <property type="nucleotide sequence ID" value="NZ_LS483365.1"/>
</dbReference>
<dbReference type="RefSeq" id="YP_499054.1">
    <property type="nucleotide sequence ID" value="NC_007795.1"/>
</dbReference>
<dbReference type="PDB" id="4YLY">
    <property type="method" value="X-ray"/>
    <property type="resolution" value="2.25 A"/>
    <property type="chains" value="A/B=1-190"/>
</dbReference>
<dbReference type="PDBsum" id="4YLY"/>
<dbReference type="SMR" id="Q2G0R9"/>
<dbReference type="STRING" id="93061.SAOUHSC_00475"/>
<dbReference type="PaxDb" id="1280-SAXN108_0554"/>
<dbReference type="GeneID" id="3920335"/>
<dbReference type="KEGG" id="sao:SAOUHSC_00475"/>
<dbReference type="PATRIC" id="fig|93061.5.peg.429"/>
<dbReference type="eggNOG" id="COG0193">
    <property type="taxonomic scope" value="Bacteria"/>
</dbReference>
<dbReference type="HOGENOM" id="CLU_062456_4_1_9"/>
<dbReference type="OrthoDB" id="9800507at2"/>
<dbReference type="BRENDA" id="3.1.1.29">
    <property type="organism ID" value="3352"/>
</dbReference>
<dbReference type="PRO" id="PR:Q2G0R9"/>
<dbReference type="Proteomes" id="UP000008816">
    <property type="component" value="Chromosome"/>
</dbReference>
<dbReference type="GO" id="GO:0005737">
    <property type="term" value="C:cytoplasm"/>
    <property type="evidence" value="ECO:0007669"/>
    <property type="project" value="UniProtKB-SubCell"/>
</dbReference>
<dbReference type="GO" id="GO:0004045">
    <property type="term" value="F:peptidyl-tRNA hydrolase activity"/>
    <property type="evidence" value="ECO:0000318"/>
    <property type="project" value="GO_Central"/>
</dbReference>
<dbReference type="GO" id="GO:0000049">
    <property type="term" value="F:tRNA binding"/>
    <property type="evidence" value="ECO:0007669"/>
    <property type="project" value="UniProtKB-UniRule"/>
</dbReference>
<dbReference type="GO" id="GO:0006515">
    <property type="term" value="P:protein quality control for misfolded or incompletely synthesized proteins"/>
    <property type="evidence" value="ECO:0007669"/>
    <property type="project" value="UniProtKB-UniRule"/>
</dbReference>
<dbReference type="GO" id="GO:0072344">
    <property type="term" value="P:rescue of stalled ribosome"/>
    <property type="evidence" value="ECO:0007669"/>
    <property type="project" value="UniProtKB-UniRule"/>
</dbReference>
<dbReference type="CDD" id="cd00462">
    <property type="entry name" value="PTH"/>
    <property type="match status" value="1"/>
</dbReference>
<dbReference type="FunFam" id="3.40.50.1470:FF:000001">
    <property type="entry name" value="Peptidyl-tRNA hydrolase"/>
    <property type="match status" value="1"/>
</dbReference>
<dbReference type="Gene3D" id="3.40.50.1470">
    <property type="entry name" value="Peptidyl-tRNA hydrolase"/>
    <property type="match status" value="1"/>
</dbReference>
<dbReference type="HAMAP" id="MF_00083">
    <property type="entry name" value="Pept_tRNA_hydro_bact"/>
    <property type="match status" value="1"/>
</dbReference>
<dbReference type="InterPro" id="IPR001328">
    <property type="entry name" value="Pept_tRNA_hydro"/>
</dbReference>
<dbReference type="InterPro" id="IPR018171">
    <property type="entry name" value="Pept_tRNA_hydro_CS"/>
</dbReference>
<dbReference type="InterPro" id="IPR036416">
    <property type="entry name" value="Pept_tRNA_hydro_sf"/>
</dbReference>
<dbReference type="NCBIfam" id="TIGR00447">
    <property type="entry name" value="pth"/>
    <property type="match status" value="1"/>
</dbReference>
<dbReference type="PANTHER" id="PTHR17224">
    <property type="entry name" value="PEPTIDYL-TRNA HYDROLASE"/>
    <property type="match status" value="1"/>
</dbReference>
<dbReference type="PANTHER" id="PTHR17224:SF1">
    <property type="entry name" value="PEPTIDYL-TRNA HYDROLASE"/>
    <property type="match status" value="1"/>
</dbReference>
<dbReference type="Pfam" id="PF01195">
    <property type="entry name" value="Pept_tRNA_hydro"/>
    <property type="match status" value="1"/>
</dbReference>
<dbReference type="SUPFAM" id="SSF53178">
    <property type="entry name" value="Peptidyl-tRNA hydrolase-like"/>
    <property type="match status" value="1"/>
</dbReference>
<dbReference type="PROSITE" id="PS01195">
    <property type="entry name" value="PEPT_TRNA_HYDROL_1"/>
    <property type="match status" value="1"/>
</dbReference>
<dbReference type="PROSITE" id="PS01196">
    <property type="entry name" value="PEPT_TRNA_HYDROL_2"/>
    <property type="match status" value="1"/>
</dbReference>
<evidence type="ECO:0000255" key="1">
    <source>
        <dbReference type="HAMAP-Rule" id="MF_00083"/>
    </source>
</evidence>
<evidence type="ECO:0000269" key="2">
    <source>
    </source>
</evidence>
<evidence type="ECO:0000303" key="3">
    <source>
    </source>
</evidence>
<evidence type="ECO:0007744" key="4">
    <source>
        <dbReference type="PDB" id="4YLY"/>
    </source>
</evidence>
<evidence type="ECO:0007829" key="5">
    <source>
        <dbReference type="PDB" id="4YLY"/>
    </source>
</evidence>
<proteinExistence type="evidence at protein level"/>
<name>PTH_STAA8</name>
<feature type="chain" id="PRO_0000264113" description="Peptidyl-tRNA hydrolase">
    <location>
        <begin position="1"/>
        <end position="190"/>
    </location>
</feature>
<feature type="active site" description="Proton acceptor" evidence="1">
    <location>
        <position position="19"/>
    </location>
</feature>
<feature type="binding site" evidence="1">
    <location>
        <position position="14"/>
    </location>
    <ligand>
        <name>tRNA</name>
        <dbReference type="ChEBI" id="CHEBI:17843"/>
    </ligand>
</feature>
<feature type="binding site" evidence="1">
    <location>
        <position position="64"/>
    </location>
    <ligand>
        <name>tRNA</name>
        <dbReference type="ChEBI" id="CHEBI:17843"/>
    </ligand>
</feature>
<feature type="binding site" evidence="1">
    <location>
        <position position="66"/>
    </location>
    <ligand>
        <name>tRNA</name>
        <dbReference type="ChEBI" id="CHEBI:17843"/>
    </ligand>
</feature>
<feature type="binding site" evidence="1">
    <location>
        <position position="112"/>
    </location>
    <ligand>
        <name>tRNA</name>
        <dbReference type="ChEBI" id="CHEBI:17843"/>
    </ligand>
</feature>
<feature type="site" description="Discriminates between blocked and unblocked aminoacyl-tRNA" evidence="1">
    <location>
        <position position="9"/>
    </location>
</feature>
<feature type="site" description="Stabilizes the basic form of H active site to accept a proton" evidence="1">
    <location>
        <position position="91"/>
    </location>
</feature>
<feature type="strand" evidence="5">
    <location>
        <begin position="2"/>
        <end position="6"/>
    </location>
</feature>
<feature type="helix" evidence="5">
    <location>
        <begin position="12"/>
        <end position="14"/>
    </location>
</feature>
<feature type="helix" evidence="5">
    <location>
        <begin position="18"/>
        <end position="20"/>
    </location>
</feature>
<feature type="helix" evidence="5">
    <location>
        <begin position="21"/>
        <end position="32"/>
    </location>
</feature>
<feature type="strand" evidence="5">
    <location>
        <begin position="39"/>
        <end position="41"/>
    </location>
</feature>
<feature type="strand" evidence="5">
    <location>
        <begin position="44"/>
        <end position="53"/>
    </location>
</feature>
<feature type="strand" evidence="5">
    <location>
        <begin position="55"/>
        <end position="63"/>
    </location>
</feature>
<feature type="helix" evidence="5">
    <location>
        <begin position="65"/>
        <end position="68"/>
    </location>
</feature>
<feature type="helix" evidence="5">
    <location>
        <begin position="69"/>
        <end position="78"/>
    </location>
</feature>
<feature type="helix" evidence="5">
    <location>
        <begin position="83"/>
        <end position="85"/>
    </location>
</feature>
<feature type="strand" evidence="5">
    <location>
        <begin position="86"/>
        <end position="92"/>
    </location>
</feature>
<feature type="strand" evidence="5">
    <location>
        <begin position="99"/>
        <end position="105"/>
    </location>
</feature>
<feature type="helix" evidence="5">
    <location>
        <begin position="112"/>
        <end position="121"/>
    </location>
</feature>
<feature type="strand" evidence="5">
    <location>
        <begin position="126"/>
        <end position="132"/>
    </location>
</feature>
<feature type="strand" evidence="5">
    <location>
        <begin position="137"/>
        <end position="139"/>
    </location>
</feature>
<feature type="helix" evidence="5">
    <location>
        <begin position="142"/>
        <end position="146"/>
    </location>
</feature>
<feature type="helix" evidence="5">
    <location>
        <begin position="152"/>
        <end position="175"/>
    </location>
</feature>
<feature type="helix" evidence="5">
    <location>
        <begin position="178"/>
        <end position="185"/>
    </location>
</feature>
<feature type="strand" evidence="5">
    <location>
        <begin position="186"/>
        <end position="188"/>
    </location>
</feature>
<organism>
    <name type="scientific">Staphylococcus aureus (strain NCTC 8325 / PS 47)</name>
    <dbReference type="NCBI Taxonomy" id="93061"/>
    <lineage>
        <taxon>Bacteria</taxon>
        <taxon>Bacillati</taxon>
        <taxon>Bacillota</taxon>
        <taxon>Bacilli</taxon>
        <taxon>Bacillales</taxon>
        <taxon>Staphylococcaceae</taxon>
        <taxon>Staphylococcus</taxon>
    </lineage>
</organism>